<sequence>MKARNESMSKGEYKTKSLKNRPDPTQPKLKKPSWIKAKLPSAKHIGRVKELKQVLREQGLNSVCEEASCPNLGECFGHGTATFMIMGHICTRKCPFCDVTHGRPNPLNQDEPRHLAKTIHAMNLNYVVITSVDRDDLRDGGATHFKNCTQAIRDKMPDIQIETLVPDFRGRLTVALDILAQQAPDVLNHNLETVPRLYEEARPGADYQASLDLLKRFKQMVPETKTKSGLMVGLGETFDEILQVMRDLRAHDVEMLTVGQYLQPSDFHLAVQRYWTPEEFKQLEQAGMEMGFTHVASGPMVRSSYHADLQAQGQFS</sequence>
<proteinExistence type="inferred from homology"/>
<comment type="function">
    <text evidence="1">Catalyzes the radical-mediated insertion of two sulfur atoms into the C-6 and C-8 positions of the octanoyl moiety bound to the lipoyl domains of lipoate-dependent enzymes, thereby converting the octanoylated domains into lipoylated derivatives.</text>
</comment>
<comment type="catalytic activity">
    <reaction evidence="1">
        <text>[[Fe-S] cluster scaffold protein carrying a second [4Fe-4S](2+) cluster] + N(6)-octanoyl-L-lysyl-[protein] + 2 oxidized [2Fe-2S]-[ferredoxin] + 2 S-adenosyl-L-methionine + 4 H(+) = [[Fe-S] cluster scaffold protein] + N(6)-[(R)-dihydrolipoyl]-L-lysyl-[protein] + 4 Fe(3+) + 2 hydrogen sulfide + 2 5'-deoxyadenosine + 2 L-methionine + 2 reduced [2Fe-2S]-[ferredoxin]</text>
        <dbReference type="Rhea" id="RHEA:16585"/>
        <dbReference type="Rhea" id="RHEA-COMP:9928"/>
        <dbReference type="Rhea" id="RHEA-COMP:10000"/>
        <dbReference type="Rhea" id="RHEA-COMP:10001"/>
        <dbReference type="Rhea" id="RHEA-COMP:10475"/>
        <dbReference type="Rhea" id="RHEA-COMP:14568"/>
        <dbReference type="Rhea" id="RHEA-COMP:14569"/>
        <dbReference type="ChEBI" id="CHEBI:15378"/>
        <dbReference type="ChEBI" id="CHEBI:17319"/>
        <dbReference type="ChEBI" id="CHEBI:29034"/>
        <dbReference type="ChEBI" id="CHEBI:29919"/>
        <dbReference type="ChEBI" id="CHEBI:33722"/>
        <dbReference type="ChEBI" id="CHEBI:33737"/>
        <dbReference type="ChEBI" id="CHEBI:33738"/>
        <dbReference type="ChEBI" id="CHEBI:57844"/>
        <dbReference type="ChEBI" id="CHEBI:59789"/>
        <dbReference type="ChEBI" id="CHEBI:78809"/>
        <dbReference type="ChEBI" id="CHEBI:83100"/>
        <dbReference type="EC" id="2.8.1.8"/>
    </reaction>
</comment>
<comment type="cofactor">
    <cofactor evidence="1">
        <name>[4Fe-4S] cluster</name>
        <dbReference type="ChEBI" id="CHEBI:49883"/>
    </cofactor>
    <text evidence="1">Binds 2 [4Fe-4S] clusters per subunit. One cluster is coordinated with 3 cysteines and an exchangeable S-adenosyl-L-methionine.</text>
</comment>
<comment type="pathway">
    <text evidence="1">Protein modification; protein lipoylation via endogenous pathway; protein N(6)-(lipoyl)lysine from octanoyl-[acyl-carrier-protein]: step 2/2.</text>
</comment>
<comment type="subcellular location">
    <subcellularLocation>
        <location evidence="1">Cytoplasm</location>
    </subcellularLocation>
</comment>
<comment type="similarity">
    <text evidence="1">Belongs to the radical SAM superfamily. Lipoyl synthase family.</text>
</comment>
<comment type="sequence caution" evidence="4">
    <conflict type="erroneous initiation">
        <sequence resource="EMBL-CDS" id="ABB42231"/>
    </conflict>
</comment>
<gene>
    <name evidence="1" type="primary">lipA</name>
    <name type="ordered locus">Tcr_1639</name>
</gene>
<keyword id="KW-0004">4Fe-4S</keyword>
<keyword id="KW-0963">Cytoplasm</keyword>
<keyword id="KW-0408">Iron</keyword>
<keyword id="KW-0411">Iron-sulfur</keyword>
<keyword id="KW-0479">Metal-binding</keyword>
<keyword id="KW-0949">S-adenosyl-L-methionine</keyword>
<keyword id="KW-0808">Transferase</keyword>
<organism>
    <name type="scientific">Hydrogenovibrio crunogenus (strain DSM 25203 / XCL-2)</name>
    <name type="common">Thiomicrospira crunogena</name>
    <dbReference type="NCBI Taxonomy" id="317025"/>
    <lineage>
        <taxon>Bacteria</taxon>
        <taxon>Pseudomonadati</taxon>
        <taxon>Pseudomonadota</taxon>
        <taxon>Gammaproteobacteria</taxon>
        <taxon>Thiotrichales</taxon>
        <taxon>Piscirickettsiaceae</taxon>
        <taxon>Hydrogenovibrio</taxon>
    </lineage>
</organism>
<reference key="1">
    <citation type="journal article" date="2006" name="PLoS Biol.">
        <title>The genome of deep-sea vent chemolithoautotroph Thiomicrospira crunogena XCL-2.</title>
        <authorList>
            <person name="Scott K.M."/>
            <person name="Sievert S.M."/>
            <person name="Abril F.N."/>
            <person name="Ball L.A."/>
            <person name="Barrett C.J."/>
            <person name="Blake R.A."/>
            <person name="Boller A.J."/>
            <person name="Chain P.S.G."/>
            <person name="Clark J.A."/>
            <person name="Davis C.R."/>
            <person name="Detter C."/>
            <person name="Do K.F."/>
            <person name="Dobrinski K.P."/>
            <person name="Faza B.I."/>
            <person name="Fitzpatrick K.A."/>
            <person name="Freyermuth S.K."/>
            <person name="Harmer T.L."/>
            <person name="Hauser L.J."/>
            <person name="Huegler M."/>
            <person name="Kerfeld C.A."/>
            <person name="Klotz M.G."/>
            <person name="Kong W.W."/>
            <person name="Land M."/>
            <person name="Lapidus A."/>
            <person name="Larimer F.W."/>
            <person name="Longo D.L."/>
            <person name="Lucas S."/>
            <person name="Malfatti S.A."/>
            <person name="Massey S.E."/>
            <person name="Martin D.D."/>
            <person name="McCuddin Z."/>
            <person name="Meyer F."/>
            <person name="Moore J.L."/>
            <person name="Ocampo L.H. Jr."/>
            <person name="Paul J.H."/>
            <person name="Paulsen I.T."/>
            <person name="Reep D.K."/>
            <person name="Ren Q."/>
            <person name="Ross R.L."/>
            <person name="Sato P.Y."/>
            <person name="Thomas P."/>
            <person name="Tinkham L.E."/>
            <person name="Zeruth G.T."/>
        </authorList>
    </citation>
    <scope>NUCLEOTIDE SEQUENCE [LARGE SCALE GENOMIC DNA]</scope>
    <source>
        <strain>DSM 25203 / XCL-2</strain>
    </source>
</reference>
<evidence type="ECO:0000255" key="1">
    <source>
        <dbReference type="HAMAP-Rule" id="MF_00206"/>
    </source>
</evidence>
<evidence type="ECO:0000255" key="2">
    <source>
        <dbReference type="PROSITE-ProRule" id="PRU01266"/>
    </source>
</evidence>
<evidence type="ECO:0000256" key="3">
    <source>
        <dbReference type="SAM" id="MobiDB-lite"/>
    </source>
</evidence>
<evidence type="ECO:0000305" key="4"/>
<accession>Q31F42</accession>
<protein>
    <recommendedName>
        <fullName evidence="1">Lipoyl synthase</fullName>
        <ecNumber evidence="1">2.8.1.8</ecNumber>
    </recommendedName>
    <alternativeName>
        <fullName evidence="1">Lip-syn</fullName>
        <shortName evidence="1">LS</shortName>
    </alternativeName>
    <alternativeName>
        <fullName evidence="1">Lipoate synthase</fullName>
    </alternativeName>
    <alternativeName>
        <fullName evidence="1">Lipoic acid synthase</fullName>
    </alternativeName>
    <alternativeName>
        <fullName evidence="1">Sulfur insertion protein LipA</fullName>
    </alternativeName>
</protein>
<name>LIPA_HYDCU</name>
<dbReference type="EC" id="2.8.1.8" evidence="1"/>
<dbReference type="EMBL" id="CP000109">
    <property type="protein sequence ID" value="ABB42231.1"/>
    <property type="status" value="ALT_INIT"/>
    <property type="molecule type" value="Genomic_DNA"/>
</dbReference>
<dbReference type="SMR" id="Q31F42"/>
<dbReference type="STRING" id="317025.Tcr_1639"/>
<dbReference type="KEGG" id="tcx:Tcr_1639"/>
<dbReference type="eggNOG" id="COG0320">
    <property type="taxonomic scope" value="Bacteria"/>
</dbReference>
<dbReference type="HOGENOM" id="CLU_033144_2_1_6"/>
<dbReference type="UniPathway" id="UPA00538">
    <property type="reaction ID" value="UER00593"/>
</dbReference>
<dbReference type="GO" id="GO:0005737">
    <property type="term" value="C:cytoplasm"/>
    <property type="evidence" value="ECO:0007669"/>
    <property type="project" value="UniProtKB-SubCell"/>
</dbReference>
<dbReference type="GO" id="GO:0051539">
    <property type="term" value="F:4 iron, 4 sulfur cluster binding"/>
    <property type="evidence" value="ECO:0007669"/>
    <property type="project" value="UniProtKB-UniRule"/>
</dbReference>
<dbReference type="GO" id="GO:0016992">
    <property type="term" value="F:lipoate synthase activity"/>
    <property type="evidence" value="ECO:0007669"/>
    <property type="project" value="UniProtKB-UniRule"/>
</dbReference>
<dbReference type="GO" id="GO:0046872">
    <property type="term" value="F:metal ion binding"/>
    <property type="evidence" value="ECO:0007669"/>
    <property type="project" value="UniProtKB-KW"/>
</dbReference>
<dbReference type="CDD" id="cd01335">
    <property type="entry name" value="Radical_SAM"/>
    <property type="match status" value="1"/>
</dbReference>
<dbReference type="FunFam" id="3.20.20.70:FF:000040">
    <property type="entry name" value="Lipoyl synthase"/>
    <property type="match status" value="1"/>
</dbReference>
<dbReference type="Gene3D" id="3.20.20.70">
    <property type="entry name" value="Aldolase class I"/>
    <property type="match status" value="1"/>
</dbReference>
<dbReference type="HAMAP" id="MF_00206">
    <property type="entry name" value="Lipoyl_synth"/>
    <property type="match status" value="1"/>
</dbReference>
<dbReference type="InterPro" id="IPR013785">
    <property type="entry name" value="Aldolase_TIM"/>
</dbReference>
<dbReference type="InterPro" id="IPR006638">
    <property type="entry name" value="Elp3/MiaA/NifB-like_rSAM"/>
</dbReference>
<dbReference type="InterPro" id="IPR003698">
    <property type="entry name" value="Lipoyl_synth"/>
</dbReference>
<dbReference type="InterPro" id="IPR007197">
    <property type="entry name" value="rSAM"/>
</dbReference>
<dbReference type="NCBIfam" id="TIGR00510">
    <property type="entry name" value="lipA"/>
    <property type="match status" value="1"/>
</dbReference>
<dbReference type="NCBIfam" id="NF004019">
    <property type="entry name" value="PRK05481.1"/>
    <property type="match status" value="1"/>
</dbReference>
<dbReference type="NCBIfam" id="NF009544">
    <property type="entry name" value="PRK12928.1"/>
    <property type="match status" value="1"/>
</dbReference>
<dbReference type="PANTHER" id="PTHR10949">
    <property type="entry name" value="LIPOYL SYNTHASE"/>
    <property type="match status" value="1"/>
</dbReference>
<dbReference type="PANTHER" id="PTHR10949:SF0">
    <property type="entry name" value="LIPOYL SYNTHASE, MITOCHONDRIAL"/>
    <property type="match status" value="1"/>
</dbReference>
<dbReference type="Pfam" id="PF04055">
    <property type="entry name" value="Radical_SAM"/>
    <property type="match status" value="1"/>
</dbReference>
<dbReference type="PIRSF" id="PIRSF005963">
    <property type="entry name" value="Lipoyl_synth"/>
    <property type="match status" value="1"/>
</dbReference>
<dbReference type="SFLD" id="SFLDF00271">
    <property type="entry name" value="lipoyl_synthase"/>
    <property type="match status" value="1"/>
</dbReference>
<dbReference type="SFLD" id="SFLDS00029">
    <property type="entry name" value="Radical_SAM"/>
    <property type="match status" value="1"/>
</dbReference>
<dbReference type="SMART" id="SM00729">
    <property type="entry name" value="Elp3"/>
    <property type="match status" value="1"/>
</dbReference>
<dbReference type="SUPFAM" id="SSF102114">
    <property type="entry name" value="Radical SAM enzymes"/>
    <property type="match status" value="1"/>
</dbReference>
<dbReference type="PROSITE" id="PS51918">
    <property type="entry name" value="RADICAL_SAM"/>
    <property type="match status" value="1"/>
</dbReference>
<feature type="chain" id="PRO_0000325319" description="Lipoyl synthase">
    <location>
        <begin position="1"/>
        <end position="316"/>
    </location>
</feature>
<feature type="domain" description="Radical SAM core" evidence="2">
    <location>
        <begin position="76"/>
        <end position="293"/>
    </location>
</feature>
<feature type="region of interest" description="Disordered" evidence="3">
    <location>
        <begin position="1"/>
        <end position="33"/>
    </location>
</feature>
<feature type="compositionally biased region" description="Basic and acidic residues" evidence="3">
    <location>
        <begin position="1"/>
        <end position="15"/>
    </location>
</feature>
<feature type="binding site" evidence="1">
    <location>
        <position position="64"/>
    </location>
    <ligand>
        <name>[4Fe-4S] cluster</name>
        <dbReference type="ChEBI" id="CHEBI:49883"/>
        <label>1</label>
    </ligand>
</feature>
<feature type="binding site" evidence="1">
    <location>
        <position position="69"/>
    </location>
    <ligand>
        <name>[4Fe-4S] cluster</name>
        <dbReference type="ChEBI" id="CHEBI:49883"/>
        <label>1</label>
    </ligand>
</feature>
<feature type="binding site" evidence="1">
    <location>
        <position position="75"/>
    </location>
    <ligand>
        <name>[4Fe-4S] cluster</name>
        <dbReference type="ChEBI" id="CHEBI:49883"/>
        <label>1</label>
    </ligand>
</feature>
<feature type="binding site" evidence="1">
    <location>
        <position position="90"/>
    </location>
    <ligand>
        <name>[4Fe-4S] cluster</name>
        <dbReference type="ChEBI" id="CHEBI:49883"/>
        <label>2</label>
        <note>4Fe-4S-S-AdoMet</note>
    </ligand>
</feature>
<feature type="binding site" evidence="1">
    <location>
        <position position="94"/>
    </location>
    <ligand>
        <name>[4Fe-4S] cluster</name>
        <dbReference type="ChEBI" id="CHEBI:49883"/>
        <label>2</label>
        <note>4Fe-4S-S-AdoMet</note>
    </ligand>
</feature>
<feature type="binding site" evidence="1">
    <location>
        <position position="97"/>
    </location>
    <ligand>
        <name>[4Fe-4S] cluster</name>
        <dbReference type="ChEBI" id="CHEBI:49883"/>
        <label>2</label>
        <note>4Fe-4S-S-AdoMet</note>
    </ligand>
</feature>
<feature type="binding site" evidence="1">
    <location>
        <position position="304"/>
    </location>
    <ligand>
        <name>[4Fe-4S] cluster</name>
        <dbReference type="ChEBI" id="CHEBI:49883"/>
        <label>1</label>
    </ligand>
</feature>